<dbReference type="EMBL" id="AK138417">
    <property type="protein sequence ID" value="BAE23651.1"/>
    <property type="molecule type" value="mRNA"/>
</dbReference>
<dbReference type="EMBL" id="AK149975">
    <property type="protein sequence ID" value="BAE29205.1"/>
    <property type="molecule type" value="mRNA"/>
</dbReference>
<dbReference type="EMBL" id="AK150109">
    <property type="protein sequence ID" value="BAE29314.1"/>
    <property type="molecule type" value="mRNA"/>
</dbReference>
<dbReference type="EMBL" id="AK155729">
    <property type="protein sequence ID" value="BAE33406.1"/>
    <property type="molecule type" value="mRNA"/>
</dbReference>
<dbReference type="EMBL" id="AK166583">
    <property type="protein sequence ID" value="BAE38872.1"/>
    <property type="molecule type" value="mRNA"/>
</dbReference>
<dbReference type="EMBL" id="AK166622">
    <property type="protein sequence ID" value="BAE38901.1"/>
    <property type="molecule type" value="mRNA"/>
</dbReference>
<dbReference type="EMBL" id="AC154425">
    <property type="status" value="NOT_ANNOTATED_CDS"/>
    <property type="molecule type" value="Genomic_DNA"/>
</dbReference>
<dbReference type="EMBL" id="CT009576">
    <property type="status" value="NOT_ANNOTATED_CDS"/>
    <property type="molecule type" value="Genomic_DNA"/>
</dbReference>
<dbReference type="EMBL" id="AF151363">
    <property type="protein sequence ID" value="AAD38043.1"/>
    <property type="molecule type" value="mRNA"/>
</dbReference>
<dbReference type="EMBL" id="AK129309">
    <property type="protein sequence ID" value="BAC98119.1"/>
    <property type="molecule type" value="mRNA"/>
</dbReference>
<dbReference type="CCDS" id="CCDS28172.1"/>
<dbReference type="RefSeq" id="NP_064656.2">
    <property type="nucleotide sequence ID" value="NM_020260.2"/>
</dbReference>
<dbReference type="SMR" id="A6X8Z5"/>
<dbReference type="BioGRID" id="198630">
    <property type="interactions" value="2"/>
</dbReference>
<dbReference type="ELM" id="A6X8Z5"/>
<dbReference type="FunCoup" id="A6X8Z5">
    <property type="interactions" value="221"/>
</dbReference>
<dbReference type="IntAct" id="A6X8Z5">
    <property type="interactions" value="2"/>
</dbReference>
<dbReference type="STRING" id="10090.ENSMUSP00000023487"/>
<dbReference type="GlyGen" id="A6X8Z5">
    <property type="glycosylation" value="6 sites, 3 N-linked glycans (3 sites), 1 O-linked glycan (2 sites)"/>
</dbReference>
<dbReference type="iPTMnet" id="A6X8Z5"/>
<dbReference type="PhosphoSitePlus" id="A6X8Z5"/>
<dbReference type="SwissPalm" id="A6X8Z5"/>
<dbReference type="jPOST" id="A6X8Z5"/>
<dbReference type="PaxDb" id="10090-ENSMUSP00000023487"/>
<dbReference type="PeptideAtlas" id="A6X8Z5"/>
<dbReference type="ProteomicsDB" id="253281"/>
<dbReference type="Pumba" id="A6X8Z5"/>
<dbReference type="Antibodypedia" id="49897">
    <property type="antibodies" value="38 antibodies from 16 providers"/>
</dbReference>
<dbReference type="DNASU" id="12549"/>
<dbReference type="Ensembl" id="ENSMUST00000023487.5">
    <property type="protein sequence ID" value="ENSMUSP00000023487.5"/>
    <property type="gene ID" value="ENSMUSG00000022799.5"/>
</dbReference>
<dbReference type="GeneID" id="12549"/>
<dbReference type="KEGG" id="mmu:12549"/>
<dbReference type="UCSC" id="uc007zfg.1">
    <property type="organism name" value="mouse"/>
</dbReference>
<dbReference type="AGR" id="MGI:1333857"/>
<dbReference type="CTD" id="57514"/>
<dbReference type="MGI" id="MGI:1333857">
    <property type="gene designation" value="Arhgap31"/>
</dbReference>
<dbReference type="VEuPathDB" id="HostDB:ENSMUSG00000022799"/>
<dbReference type="eggNOG" id="KOG1449">
    <property type="taxonomic scope" value="Eukaryota"/>
</dbReference>
<dbReference type="GeneTree" id="ENSGT00940000159458"/>
<dbReference type="HOGENOM" id="CLU_006917_0_0_1"/>
<dbReference type="InParanoid" id="A6X8Z5"/>
<dbReference type="OMA" id="TVMSLWT"/>
<dbReference type="OrthoDB" id="79452at2759"/>
<dbReference type="PhylomeDB" id="A6X8Z5"/>
<dbReference type="TreeFam" id="TF351451"/>
<dbReference type="Reactome" id="R-MMU-8980692">
    <property type="pathway name" value="RHOA GTPase cycle"/>
</dbReference>
<dbReference type="Reactome" id="R-MMU-9013148">
    <property type="pathway name" value="CDC42 GTPase cycle"/>
</dbReference>
<dbReference type="Reactome" id="R-MMU-9013149">
    <property type="pathway name" value="RAC1 GTPase cycle"/>
</dbReference>
<dbReference type="Reactome" id="R-MMU-9013420">
    <property type="pathway name" value="RHOU GTPase cycle"/>
</dbReference>
<dbReference type="BioGRID-ORCS" id="12549">
    <property type="hits" value="1 hit in 77 CRISPR screens"/>
</dbReference>
<dbReference type="ChiTaRS" id="Arhgap31">
    <property type="organism name" value="mouse"/>
</dbReference>
<dbReference type="PRO" id="PR:A6X8Z5"/>
<dbReference type="Proteomes" id="UP000000589">
    <property type="component" value="Chromosome 16"/>
</dbReference>
<dbReference type="RNAct" id="A6X8Z5">
    <property type="molecule type" value="protein"/>
</dbReference>
<dbReference type="Bgee" id="ENSMUSG00000022799">
    <property type="expression patterns" value="Expressed in right lung lobe and 219 other cell types or tissues"/>
</dbReference>
<dbReference type="ExpressionAtlas" id="A6X8Z5">
    <property type="expression patterns" value="baseline and differential"/>
</dbReference>
<dbReference type="GO" id="GO:0005925">
    <property type="term" value="C:focal adhesion"/>
    <property type="evidence" value="ECO:0007669"/>
    <property type="project" value="UniProtKB-SubCell"/>
</dbReference>
<dbReference type="GO" id="GO:0030027">
    <property type="term" value="C:lamellipodium"/>
    <property type="evidence" value="ECO:0000314"/>
    <property type="project" value="MGI"/>
</dbReference>
<dbReference type="GO" id="GO:0005096">
    <property type="term" value="F:GTPase activator activity"/>
    <property type="evidence" value="ECO:0000314"/>
    <property type="project" value="MGI"/>
</dbReference>
<dbReference type="GO" id="GO:0017124">
    <property type="term" value="F:SH3 domain binding"/>
    <property type="evidence" value="ECO:0000314"/>
    <property type="project" value="MGI"/>
</dbReference>
<dbReference type="GO" id="GO:0007264">
    <property type="term" value="P:small GTPase-mediated signal transduction"/>
    <property type="evidence" value="ECO:0000314"/>
    <property type="project" value="MGI"/>
</dbReference>
<dbReference type="CDD" id="cd04384">
    <property type="entry name" value="RhoGAP_CdGAP"/>
    <property type="match status" value="1"/>
</dbReference>
<dbReference type="FunFam" id="1.10.555.10:FF:000002">
    <property type="entry name" value="rho GTPase-activating protein 32 isoform X1"/>
    <property type="match status" value="1"/>
</dbReference>
<dbReference type="Gene3D" id="1.10.555.10">
    <property type="entry name" value="Rho GTPase activation protein"/>
    <property type="match status" value="1"/>
</dbReference>
<dbReference type="InterPro" id="IPR051576">
    <property type="entry name" value="PX-Rho_GAP"/>
</dbReference>
<dbReference type="InterPro" id="IPR008936">
    <property type="entry name" value="Rho_GTPase_activation_prot"/>
</dbReference>
<dbReference type="InterPro" id="IPR000198">
    <property type="entry name" value="RhoGAP_dom"/>
</dbReference>
<dbReference type="PANTHER" id="PTHR15729">
    <property type="entry name" value="CDC42 GTPASE-ACTIVATING PROTEIN"/>
    <property type="match status" value="1"/>
</dbReference>
<dbReference type="PANTHER" id="PTHR15729:SF3">
    <property type="entry name" value="RHO GTPASE-ACTIVATING PROTEIN 31"/>
    <property type="match status" value="1"/>
</dbReference>
<dbReference type="Pfam" id="PF00620">
    <property type="entry name" value="RhoGAP"/>
    <property type="match status" value="1"/>
</dbReference>
<dbReference type="SMART" id="SM00324">
    <property type="entry name" value="RhoGAP"/>
    <property type="match status" value="1"/>
</dbReference>
<dbReference type="SUPFAM" id="SSF48350">
    <property type="entry name" value="GTPase activation domain, GAP"/>
    <property type="match status" value="1"/>
</dbReference>
<dbReference type="PROSITE" id="PS50238">
    <property type="entry name" value="RHOGAP"/>
    <property type="match status" value="1"/>
</dbReference>
<accession>A6X8Z5</accession>
<accession>Q3TL91</accession>
<accession>Q3U1T7</accession>
<accession>Q3UDE7</accession>
<accession>Q3UUH4</accession>
<accession>Q6ZPW0</accession>
<accession>Q9WV94</accession>
<gene>
    <name type="primary">Arhgap31</name>
    <name type="synonym">Cdgap</name>
    <name type="synonym">Kiaa1204</name>
</gene>
<protein>
    <recommendedName>
        <fullName>Rho GTPase-activating protein 31</fullName>
    </recommendedName>
    <alternativeName>
        <fullName>Cdc42 GTPase-activating protein</fullName>
    </alternativeName>
</protein>
<sequence>MKNKGAKQKLKRKGAASAFGCDLTEYLESSGQDVPYVLKSCAEFIETHGIVDGIYRLSGITSNIQRLRQEFGSDQCPDLTREVYLQDIHCVGSLCKLYFRELPNPLLTYELYEKFTEAVSHRPEEGQLARIQNVILELPPPHYRTLEYLIRHLAHIASFSSKTNMHARNLALVWAPNLLRSKKIEATICNGDAAFLAVRVQQVVIEFILNHADQIFNGGAPGALQQDESRTITKSLTLPALSLPMKLVSLEEAQARSLATNHPARKERRENSLPEIVPPPFHTVLELPDNKRKLSSKSKKWKSIFNLGRSGSDSKSKLSRNGSVFVRGQRLSVEKATIRPAKSMDSLCSVPVEGKENKGNFSRTVTTGGFFIPATKMHASSTGSSCDLSKEGEWGQEGMPAGAEGGCEVGGQIRPLPEQLKVFRPIGDPESEQSAPKLLGMFYTSSDSPGKSVFTSSLFQMEPSPRHQRKALNISEPFAVSVPLRVSAVISTNSTPCRTPPKELQSLSSLEEFSFQGSESGGWPEEEKPLGAESFPGSVTKKAATEDTKPEPEVPGRAECSQSPPLDPGTQVEKKTLHVSLGSQVSKEAEKRPKAEKVMEESQGASQPKPSTPQESLGAGTEPLILHEMDEEDLAQALIWPEIQQELKIIESEEEFSSLPPAAQKTSPIPESSPAPFPFPEAPGSLPSSSAPREVWTRDAANQSIQEAAILTDREKLEPVCSLLESESQQELSPDPASLAPLEMLLFEKVSSPARIEIGGPRNLSPPLTPAPPPPTPLEEEPEVLLSKEGPDREDAARDSRTDVYTEQPTPKESPGIPTPCQREEAIASPNEKQNARHAVPENKGPGLPSPTKEVDIIPQEEGGAPHSAQEPSDCDEDDTVTDPAQHGLEMVEPWEEPQWVTSPLHSPTLKEVQESQTQGSQGHRLERRLCHRPSLRQSHSLDSKTTGNSHWTLEAPFSSSCANLETERNYEPLQPPAARTKIAGLEEKALKAFREFSGLKGLEVLPSQKGPSGIQPKPVETNFMGLAEGKEQEPQLELSNRQMKHSDVPGPDSSKESSPRAQDSTLPGEHPLQLQLKNTECGPSKGKHRPSSLNLDSATPIADLFRLENGAPFSSPGIELSELGDTKVTWMSSSHCKAAPWNSQDTQDLDIVAHTLTGRRNSAPVSVSAVRTSFMVKMCQAKAVPVIPPKIQYTQIPQPLPSQSTGEGGAQPLERSQEEPGSTPEIPQKSTKDDSPSSLGSPEEEQPKQETGASASRRQASITSCMYEGSSCSPEPSASTLASTQDAVVQCRKRTSETEPSGDNLLSSKLERASGGPKAFHRSRPGRPQSLILFPIMDHLPSSPTVIDSKVLLSPIRSPTQTVSPGLLCGELAENTWITPEGVTLRNKMTIPKNGQRLETSTSCFYQPQRRSVILDGRSGRQIE</sequence>
<evidence type="ECO:0000250" key="1"/>
<evidence type="ECO:0000255" key="2">
    <source>
        <dbReference type="PROSITE-ProRule" id="PRU00172"/>
    </source>
</evidence>
<evidence type="ECO:0000256" key="3">
    <source>
        <dbReference type="SAM" id="MobiDB-lite"/>
    </source>
</evidence>
<evidence type="ECO:0000269" key="4">
    <source>
    </source>
</evidence>
<evidence type="ECO:0000269" key="5">
    <source>
    </source>
</evidence>
<evidence type="ECO:0000269" key="6">
    <source>
    </source>
</evidence>
<evidence type="ECO:0000269" key="7">
    <source>
    </source>
</evidence>
<evidence type="ECO:0000305" key="8"/>
<evidence type="ECO:0007744" key="9">
    <source>
    </source>
</evidence>
<evidence type="ECO:0007744" key="10">
    <source>
    </source>
</evidence>
<comment type="function">
    <text evidence="5 7">Functions as a GTPase-activating protein (GAP) for RAC1 and CDC42. Required for cell spreading, polarized lamellipodia formation and cell migration.</text>
</comment>
<comment type="subunit">
    <text evidence="1">Interacts with ITSN1, which inhibits GAP activity. Interacts with PARVA. Interacts with GTP-loaded RHOU (By similarity).</text>
</comment>
<comment type="interaction">
    <interactant intactId="EBI-4325995">
        <id>A6X8Z5</id>
    </interactant>
    <interactant intactId="EBI-645386">
        <id>Q9Z0R4</id>
        <label>Itsn1</label>
    </interactant>
    <organismsDiffer>false</organismsDiffer>
    <experiments>3</experiments>
</comment>
<comment type="interaction">
    <interactant intactId="EBI-4325995">
        <id>A6X8Z5</id>
    </interactant>
    <interactant intactId="EBI-1638043">
        <id>Q7L0Q8</id>
        <label>RHOU</label>
    </interactant>
    <organismsDiffer>true</organismsDiffer>
    <experiments>2</experiments>
</comment>
<comment type="subcellular location">
    <subcellularLocation>
        <location>Cell projection</location>
        <location>Lamellipodium</location>
    </subcellularLocation>
    <subcellularLocation>
        <location>Cell junction</location>
        <location>Focal adhesion</location>
    </subcellularLocation>
</comment>
<comment type="tissue specificity">
    <text evidence="7">Expressed at highest levels in heart and lung.</text>
</comment>
<comment type="induction">
    <text evidence="6">By serum (at protein level).</text>
</comment>
<comment type="PTM">
    <text evidence="4 6">Phosphorylated on Thr-776 by GSK3; which reduces GAP activity.</text>
</comment>
<organism>
    <name type="scientific">Mus musculus</name>
    <name type="common">Mouse</name>
    <dbReference type="NCBI Taxonomy" id="10090"/>
    <lineage>
        <taxon>Eukaryota</taxon>
        <taxon>Metazoa</taxon>
        <taxon>Chordata</taxon>
        <taxon>Craniata</taxon>
        <taxon>Vertebrata</taxon>
        <taxon>Euteleostomi</taxon>
        <taxon>Mammalia</taxon>
        <taxon>Eutheria</taxon>
        <taxon>Euarchontoglires</taxon>
        <taxon>Glires</taxon>
        <taxon>Rodentia</taxon>
        <taxon>Myomorpha</taxon>
        <taxon>Muroidea</taxon>
        <taxon>Muridae</taxon>
        <taxon>Murinae</taxon>
        <taxon>Mus</taxon>
        <taxon>Mus</taxon>
    </lineage>
</organism>
<proteinExistence type="evidence at protein level"/>
<feature type="chain" id="PRO_0000320115" description="Rho GTPase-activating protein 31">
    <location>
        <begin position="1"/>
        <end position="1425"/>
    </location>
</feature>
<feature type="domain" description="Rho-GAP" evidence="2">
    <location>
        <begin position="21"/>
        <end position="216"/>
    </location>
</feature>
<feature type="region of interest" description="Disordered" evidence="3">
    <location>
        <begin position="258"/>
        <end position="277"/>
    </location>
</feature>
<feature type="region of interest" description="Disordered" evidence="3">
    <location>
        <begin position="511"/>
        <end position="621"/>
    </location>
</feature>
<feature type="region of interest" description="Disordered" evidence="3">
    <location>
        <begin position="652"/>
        <end position="700"/>
    </location>
</feature>
<feature type="region of interest" description="Disordered" evidence="3">
    <location>
        <begin position="756"/>
        <end position="951"/>
    </location>
</feature>
<feature type="region of interest" description="Disordered" evidence="3">
    <location>
        <begin position="1031"/>
        <end position="1095"/>
    </location>
</feature>
<feature type="region of interest" description="Disordered" evidence="3">
    <location>
        <begin position="1196"/>
        <end position="1260"/>
    </location>
</feature>
<feature type="region of interest" description="Disordered" evidence="3">
    <location>
        <begin position="1291"/>
        <end position="1327"/>
    </location>
</feature>
<feature type="compositionally biased region" description="Low complexity" evidence="3">
    <location>
        <begin position="511"/>
        <end position="522"/>
    </location>
</feature>
<feature type="compositionally biased region" description="Basic and acidic residues" evidence="3">
    <location>
        <begin position="543"/>
        <end position="556"/>
    </location>
</feature>
<feature type="compositionally biased region" description="Basic and acidic residues" evidence="3">
    <location>
        <begin position="587"/>
        <end position="600"/>
    </location>
</feature>
<feature type="compositionally biased region" description="Polar residues" evidence="3">
    <location>
        <begin position="603"/>
        <end position="615"/>
    </location>
</feature>
<feature type="compositionally biased region" description="Pro residues" evidence="3">
    <location>
        <begin position="671"/>
        <end position="681"/>
    </location>
</feature>
<feature type="compositionally biased region" description="Pro residues" evidence="3">
    <location>
        <begin position="767"/>
        <end position="777"/>
    </location>
</feature>
<feature type="compositionally biased region" description="Basic and acidic residues" evidence="3">
    <location>
        <begin position="789"/>
        <end position="804"/>
    </location>
</feature>
<feature type="compositionally biased region" description="Polar residues" evidence="3">
    <location>
        <begin position="936"/>
        <end position="951"/>
    </location>
</feature>
<feature type="compositionally biased region" description="Polar residues" evidence="3">
    <location>
        <begin position="1196"/>
        <end position="1206"/>
    </location>
</feature>
<feature type="compositionally biased region" description="Polar residues" evidence="3">
    <location>
        <begin position="1250"/>
        <end position="1260"/>
    </location>
</feature>
<feature type="compositionally biased region" description="Polar residues" evidence="3">
    <location>
        <begin position="1299"/>
        <end position="1308"/>
    </location>
</feature>
<feature type="site" description="Arginine finger; crucial for GTP hydrolysis by stabilizing the transition state" evidence="2">
    <location>
        <position position="56"/>
    </location>
</feature>
<feature type="modified residue" description="Phosphoserine" evidence="10">
    <location>
        <position position="272"/>
    </location>
</feature>
<feature type="modified residue" description="Phosphothreonine" evidence="10">
    <location>
        <position position="283"/>
    </location>
</feature>
<feature type="modified residue" description="Phosphoserine" evidence="9 10">
    <location>
        <position position="343"/>
    </location>
</feature>
<feature type="modified residue" description="Phosphoserine" evidence="10">
    <location>
        <position position="346"/>
    </location>
</feature>
<feature type="modified residue" description="Phosphoserine" evidence="10">
    <location>
        <position position="384"/>
    </location>
</feature>
<feature type="modified residue" description="Phosphoserine" evidence="10">
    <location>
        <position position="464"/>
    </location>
</feature>
<feature type="modified residue" description="Phosphothreonine" evidence="10">
    <location>
        <position position="666"/>
    </location>
</feature>
<feature type="modified residue" description="Phosphoserine" evidence="10">
    <location>
        <position position="685"/>
    </location>
</feature>
<feature type="modified residue" description="Phosphoserine" evidence="10">
    <location>
        <position position="690"/>
    </location>
</feature>
<feature type="modified residue" description="Phosphoserine" evidence="10">
    <location>
        <position position="765"/>
    </location>
</feature>
<feature type="modified residue" description="Phosphothreonine" evidence="10">
    <location>
        <position position="769"/>
    </location>
</feature>
<feature type="modified residue" description="Phosphothreonine; by GSK3" evidence="4 6">
    <location>
        <position position="776"/>
    </location>
</feature>
<feature type="modified residue" description="Phosphoserine" evidence="10">
    <location>
        <position position="961"/>
    </location>
</feature>
<feature type="modified residue" description="Phosphoserine" evidence="10">
    <location>
        <position position="1092"/>
    </location>
</feature>
<feature type="modified residue" description="Phosphoserine" evidence="10">
    <location>
        <position position="1093"/>
    </location>
</feature>
<feature type="modified residue" description="Phosphoserine" evidence="10">
    <location>
        <position position="1163"/>
    </location>
</feature>
<feature type="mutagenesis site" description="70% reduction of GAP activity; when associated with V-169." evidence="5">
    <original>R</original>
    <variation>A</variation>
    <location>
        <position position="56"/>
    </location>
</feature>
<feature type="mutagenesis site" description="70% reduction of GAP activity; when associated with A-56." evidence="5">
    <original>N</original>
    <variation>V</variation>
    <location>
        <position position="169"/>
    </location>
</feature>
<feature type="sequence conflict" description="In Ref. 2; BAE33406." evidence="8" ref="2">
    <original>R</original>
    <variation>K</variation>
    <location>
        <position position="292"/>
    </location>
</feature>
<feature type="sequence conflict" description="In Ref. 2; BAE38872/BAE38901." evidence="8" ref="2">
    <original>V</original>
    <variation>F</variation>
    <location>
        <position position="1153"/>
    </location>
</feature>
<feature type="sequence conflict" description="In Ref. 2; BAE38872/BAE38901." evidence="8" ref="2">
    <original>S</original>
    <variation>C</variation>
    <location>
        <position position="1365"/>
    </location>
</feature>
<keyword id="KW-0965">Cell junction</keyword>
<keyword id="KW-0966">Cell projection</keyword>
<keyword id="KW-0343">GTPase activation</keyword>
<keyword id="KW-0597">Phosphoprotein</keyword>
<keyword id="KW-1185">Reference proteome</keyword>
<reference key="1">
    <citation type="journal article" date="2005" name="Science">
        <title>The transcriptional landscape of the mammalian genome.</title>
        <authorList>
            <person name="Carninci P."/>
            <person name="Kasukawa T."/>
            <person name="Katayama S."/>
            <person name="Gough J."/>
            <person name="Frith M.C."/>
            <person name="Maeda N."/>
            <person name="Oyama R."/>
            <person name="Ravasi T."/>
            <person name="Lenhard B."/>
            <person name="Wells C."/>
            <person name="Kodzius R."/>
            <person name="Shimokawa K."/>
            <person name="Bajic V.B."/>
            <person name="Brenner S.E."/>
            <person name="Batalov S."/>
            <person name="Forrest A.R."/>
            <person name="Zavolan M."/>
            <person name="Davis M.J."/>
            <person name="Wilming L.G."/>
            <person name="Aidinis V."/>
            <person name="Allen J.E."/>
            <person name="Ambesi-Impiombato A."/>
            <person name="Apweiler R."/>
            <person name="Aturaliya R.N."/>
            <person name="Bailey T.L."/>
            <person name="Bansal M."/>
            <person name="Baxter L."/>
            <person name="Beisel K.W."/>
            <person name="Bersano T."/>
            <person name="Bono H."/>
            <person name="Chalk A.M."/>
            <person name="Chiu K.P."/>
            <person name="Choudhary V."/>
            <person name="Christoffels A."/>
            <person name="Clutterbuck D.R."/>
            <person name="Crowe M.L."/>
            <person name="Dalla E."/>
            <person name="Dalrymple B.P."/>
            <person name="de Bono B."/>
            <person name="Della Gatta G."/>
            <person name="di Bernardo D."/>
            <person name="Down T."/>
            <person name="Engstrom P."/>
            <person name="Fagiolini M."/>
            <person name="Faulkner G."/>
            <person name="Fletcher C.F."/>
            <person name="Fukushima T."/>
            <person name="Furuno M."/>
            <person name="Futaki S."/>
            <person name="Gariboldi M."/>
            <person name="Georgii-Hemming P."/>
            <person name="Gingeras T.R."/>
            <person name="Gojobori T."/>
            <person name="Green R.E."/>
            <person name="Gustincich S."/>
            <person name="Harbers M."/>
            <person name="Hayashi Y."/>
            <person name="Hensch T.K."/>
            <person name="Hirokawa N."/>
            <person name="Hill D."/>
            <person name="Huminiecki L."/>
            <person name="Iacono M."/>
            <person name="Ikeo K."/>
            <person name="Iwama A."/>
            <person name="Ishikawa T."/>
            <person name="Jakt M."/>
            <person name="Kanapin A."/>
            <person name="Katoh M."/>
            <person name="Kawasawa Y."/>
            <person name="Kelso J."/>
            <person name="Kitamura H."/>
            <person name="Kitano H."/>
            <person name="Kollias G."/>
            <person name="Krishnan S.P."/>
            <person name="Kruger A."/>
            <person name="Kummerfeld S.K."/>
            <person name="Kurochkin I.V."/>
            <person name="Lareau L.F."/>
            <person name="Lazarevic D."/>
            <person name="Lipovich L."/>
            <person name="Liu J."/>
            <person name="Liuni S."/>
            <person name="McWilliam S."/>
            <person name="Madan Babu M."/>
            <person name="Madera M."/>
            <person name="Marchionni L."/>
            <person name="Matsuda H."/>
            <person name="Matsuzawa S."/>
            <person name="Miki H."/>
            <person name="Mignone F."/>
            <person name="Miyake S."/>
            <person name="Morris K."/>
            <person name="Mottagui-Tabar S."/>
            <person name="Mulder N."/>
            <person name="Nakano N."/>
            <person name="Nakauchi H."/>
            <person name="Ng P."/>
            <person name="Nilsson R."/>
            <person name="Nishiguchi S."/>
            <person name="Nishikawa S."/>
            <person name="Nori F."/>
            <person name="Ohara O."/>
            <person name="Okazaki Y."/>
            <person name="Orlando V."/>
            <person name="Pang K.C."/>
            <person name="Pavan W.J."/>
            <person name="Pavesi G."/>
            <person name="Pesole G."/>
            <person name="Petrovsky N."/>
            <person name="Piazza S."/>
            <person name="Reed J."/>
            <person name="Reid J.F."/>
            <person name="Ring B.Z."/>
            <person name="Ringwald M."/>
            <person name="Rost B."/>
            <person name="Ruan Y."/>
            <person name="Salzberg S.L."/>
            <person name="Sandelin A."/>
            <person name="Schneider C."/>
            <person name="Schoenbach C."/>
            <person name="Sekiguchi K."/>
            <person name="Semple C.A."/>
            <person name="Seno S."/>
            <person name="Sessa L."/>
            <person name="Sheng Y."/>
            <person name="Shibata Y."/>
            <person name="Shimada H."/>
            <person name="Shimada K."/>
            <person name="Silva D."/>
            <person name="Sinclair B."/>
            <person name="Sperling S."/>
            <person name="Stupka E."/>
            <person name="Sugiura K."/>
            <person name="Sultana R."/>
            <person name="Takenaka Y."/>
            <person name="Taki K."/>
            <person name="Tammoja K."/>
            <person name="Tan S.L."/>
            <person name="Tang S."/>
            <person name="Taylor M.S."/>
            <person name="Tegner J."/>
            <person name="Teichmann S.A."/>
            <person name="Ueda H.R."/>
            <person name="van Nimwegen E."/>
            <person name="Verardo R."/>
            <person name="Wei C.L."/>
            <person name="Yagi K."/>
            <person name="Yamanishi H."/>
            <person name="Zabarovsky E."/>
            <person name="Zhu S."/>
            <person name="Zimmer A."/>
            <person name="Hide W."/>
            <person name="Bult C."/>
            <person name="Grimmond S.M."/>
            <person name="Teasdale R.D."/>
            <person name="Liu E.T."/>
            <person name="Brusic V."/>
            <person name="Quackenbush J."/>
            <person name="Wahlestedt C."/>
            <person name="Mattick J.S."/>
            <person name="Hume D.A."/>
            <person name="Kai C."/>
            <person name="Sasaki D."/>
            <person name="Tomaru Y."/>
            <person name="Fukuda S."/>
            <person name="Kanamori-Katayama M."/>
            <person name="Suzuki M."/>
            <person name="Aoki J."/>
            <person name="Arakawa T."/>
            <person name="Iida J."/>
            <person name="Imamura K."/>
            <person name="Itoh M."/>
            <person name="Kato T."/>
            <person name="Kawaji H."/>
            <person name="Kawagashira N."/>
            <person name="Kawashima T."/>
            <person name="Kojima M."/>
            <person name="Kondo S."/>
            <person name="Konno H."/>
            <person name="Nakano K."/>
            <person name="Ninomiya N."/>
            <person name="Nishio T."/>
            <person name="Okada M."/>
            <person name="Plessy C."/>
            <person name="Shibata K."/>
            <person name="Shiraki T."/>
            <person name="Suzuki S."/>
            <person name="Tagami M."/>
            <person name="Waki K."/>
            <person name="Watahiki A."/>
            <person name="Okamura-Oho Y."/>
            <person name="Suzuki H."/>
            <person name="Kawai J."/>
            <person name="Hayashizaki Y."/>
        </authorList>
    </citation>
    <scope>NUCLEOTIDE SEQUENCE [LARGE SCALE MRNA]</scope>
    <source>
        <strain>C57BL/6J</strain>
        <tissue>Bone marrow</tissue>
        <tissue>Embryo</tissue>
        <tissue>Hypothalamus</tissue>
    </source>
</reference>
<reference key="2">
    <citation type="journal article" date="2009" name="PLoS Biol.">
        <title>Lineage-specific biology revealed by a finished genome assembly of the mouse.</title>
        <authorList>
            <person name="Church D.M."/>
            <person name="Goodstadt L."/>
            <person name="Hillier L.W."/>
            <person name="Zody M.C."/>
            <person name="Goldstein S."/>
            <person name="She X."/>
            <person name="Bult C.J."/>
            <person name="Agarwala R."/>
            <person name="Cherry J.L."/>
            <person name="DiCuccio M."/>
            <person name="Hlavina W."/>
            <person name="Kapustin Y."/>
            <person name="Meric P."/>
            <person name="Maglott D."/>
            <person name="Birtle Z."/>
            <person name="Marques A.C."/>
            <person name="Graves T."/>
            <person name="Zhou S."/>
            <person name="Teague B."/>
            <person name="Potamousis K."/>
            <person name="Churas C."/>
            <person name="Place M."/>
            <person name="Herschleb J."/>
            <person name="Runnheim R."/>
            <person name="Forrest D."/>
            <person name="Amos-Landgraf J."/>
            <person name="Schwartz D.C."/>
            <person name="Cheng Z."/>
            <person name="Lindblad-Toh K."/>
            <person name="Eichler E.E."/>
            <person name="Ponting C.P."/>
        </authorList>
    </citation>
    <scope>NUCLEOTIDE SEQUENCE [LARGE SCALE GENOMIC DNA]</scope>
    <source>
        <strain>C57BL/6J</strain>
    </source>
</reference>
<reference key="3">
    <citation type="journal article" date="1998" name="J. Biol. Chem.">
        <title>CdGAP, a novel proline-rich GTPase-activating protein for Cdc42 and Rac.</title>
        <authorList>
            <person name="Lamarche-Vane N."/>
            <person name="Hall A."/>
        </authorList>
    </citation>
    <scope>NUCLEOTIDE SEQUENCE [MRNA] OF 1-820</scope>
    <scope>FUNCTION</scope>
    <scope>TISSUE SPECIFICITY</scope>
</reference>
<reference key="4">
    <citation type="journal article" date="2003" name="DNA Res.">
        <title>Prediction of the coding sequences of mouse homologues of KIAA gene: III. The complete nucleotide sequences of 500 mouse KIAA-homologous cDNAs identified by screening of terminal sequences of cDNA clones randomly sampled from size-fractionated libraries.</title>
        <authorList>
            <person name="Okazaki N."/>
            <person name="Kikuno R."/>
            <person name="Ohara R."/>
            <person name="Inamoto S."/>
            <person name="Koseki H."/>
            <person name="Hiraoka S."/>
            <person name="Saga Y."/>
            <person name="Nagase T."/>
            <person name="Ohara O."/>
            <person name="Koga H."/>
        </authorList>
    </citation>
    <scope>NUCLEOTIDE SEQUENCE [LARGE SCALE MRNA] OF 406-1425</scope>
    <source>
        <tissue>Embryonic tail</tissue>
    </source>
</reference>
<reference key="5">
    <citation type="journal article" date="2002" name="J. Biol. Chem.">
        <title>The activity of the GTPase-activating protein CdGAP is regulated by the endocytic protein intersectin.</title>
        <authorList>
            <person name="Jenna S."/>
            <person name="Hussain N.K."/>
            <person name="Danek E.I."/>
            <person name="Triki I."/>
            <person name="Wasiak S."/>
            <person name="McPherson P.S."/>
            <person name="Lamarche-Vane N."/>
        </authorList>
    </citation>
    <scope>INTERACTION WITH ITSN1</scope>
    <scope>SUBCELLULAR LOCATION</scope>
</reference>
<reference key="6">
    <citation type="journal article" date="2005" name="Mol. Cell. Biol.">
        <title>Extracellular signal-regulated kinase 1 interacts with and phosphorylates CdGAP at an important regulatory site.</title>
        <authorList>
            <person name="Tcherkezian J."/>
            <person name="Danek E.I."/>
            <person name="Jenna S."/>
            <person name="Triki I."/>
            <person name="Lamarche-Vane N."/>
        </authorList>
    </citation>
    <scope>IDENTIFICATION</scope>
    <scope>PHOSPHORYLATION AT THR-776</scope>
</reference>
<reference key="7">
    <citation type="journal article" date="2006" name="Curr. Biol.">
        <title>CdGAP associates with actopaxin to regulate integrin-dependent changes in cell morphology and motility.</title>
        <authorList>
            <person name="LaLonde D.P."/>
            <person name="Grubinger M."/>
            <person name="Lamarche-Vane N."/>
            <person name="Turner C.E."/>
        </authorList>
    </citation>
    <scope>FUNCTION</scope>
    <scope>INTERACTION WITH PARVA</scope>
    <scope>SUBCELLULAR LOCATION</scope>
    <scope>MUTAGENESIS OF ARG-56 AND ASN-169</scope>
</reference>
<reference key="8">
    <citation type="journal article" date="2007" name="J. Biol. Chem.">
        <title>Glycogen synthase kinase-3 phosphorylates CdGAP at a consensus ERK 1 regulatory site.</title>
        <authorList>
            <person name="Danek E.I."/>
            <person name="Tcherkezian J."/>
            <person name="Triki I."/>
            <person name="Meriane M."/>
            <person name="Lamarche-Vane N."/>
        </authorList>
    </citation>
    <scope>PHOSPHORYLATION AT THR-776</scope>
    <scope>INDUCTION BY SERUM</scope>
</reference>
<reference key="9">
    <citation type="journal article" date="2007" name="Proc. Natl. Acad. Sci. U.S.A.">
        <title>Large-scale phosphorylation analysis of mouse liver.</title>
        <authorList>
            <person name="Villen J."/>
            <person name="Beausoleil S.A."/>
            <person name="Gerber S.A."/>
            <person name="Gygi S.P."/>
        </authorList>
    </citation>
    <scope>PHOSPHORYLATION [LARGE SCALE ANALYSIS] AT SER-343</scope>
    <scope>IDENTIFICATION BY MASS SPECTROMETRY [LARGE SCALE ANALYSIS]</scope>
    <source>
        <tissue>Liver</tissue>
    </source>
</reference>
<reference key="10">
    <citation type="journal article" date="2010" name="Cell">
        <title>A tissue-specific atlas of mouse protein phosphorylation and expression.</title>
        <authorList>
            <person name="Huttlin E.L."/>
            <person name="Jedrychowski M.P."/>
            <person name="Elias J.E."/>
            <person name="Goswami T."/>
            <person name="Rad R."/>
            <person name="Beausoleil S.A."/>
            <person name="Villen J."/>
            <person name="Haas W."/>
            <person name="Sowa M.E."/>
            <person name="Gygi S.P."/>
        </authorList>
    </citation>
    <scope>PHOSPHORYLATION [LARGE SCALE ANALYSIS] AT SER-272; THR-283; SER-343; SER-346; SER-384; SER-464; THR-666; SER-685; SER-690; SER-765; THR-769; SER-961; SER-1092; SER-1093 AND SER-1163</scope>
    <scope>IDENTIFICATION BY MASS SPECTROMETRY [LARGE SCALE ANALYSIS]</scope>
    <source>
        <tissue>Brain</tissue>
        <tissue>Brown adipose tissue</tissue>
        <tissue>Heart</tissue>
        <tissue>Kidney</tissue>
        <tissue>Liver</tissue>
        <tissue>Lung</tissue>
        <tissue>Pancreas</tissue>
        <tissue>Spleen</tissue>
        <tissue>Testis</tissue>
    </source>
</reference>
<name>RHG31_MOUSE</name>